<feature type="chain" id="PRO_1000059585" description="Chaperone protein DnaK">
    <location>
        <begin position="1"/>
        <end position="624"/>
    </location>
</feature>
<feature type="region of interest" description="Disordered" evidence="2">
    <location>
        <begin position="544"/>
        <end position="563"/>
    </location>
</feature>
<feature type="region of interest" description="Disordered" evidence="2">
    <location>
        <begin position="576"/>
        <end position="624"/>
    </location>
</feature>
<feature type="compositionally biased region" description="Low complexity" evidence="2">
    <location>
        <begin position="581"/>
        <end position="600"/>
    </location>
</feature>
<feature type="compositionally biased region" description="Basic and acidic residues" evidence="2">
    <location>
        <begin position="601"/>
        <end position="624"/>
    </location>
</feature>
<feature type="modified residue" description="Phosphothreonine; by autocatalysis" evidence="1">
    <location>
        <position position="174"/>
    </location>
</feature>
<evidence type="ECO:0000255" key="1">
    <source>
        <dbReference type="HAMAP-Rule" id="MF_00332"/>
    </source>
</evidence>
<evidence type="ECO:0000256" key="2">
    <source>
        <dbReference type="SAM" id="MobiDB-lite"/>
    </source>
</evidence>
<gene>
    <name evidence="1" type="primary">dnaK</name>
    <name type="ordered locus">LSEI_1565</name>
</gene>
<protein>
    <recommendedName>
        <fullName evidence="1">Chaperone protein DnaK</fullName>
    </recommendedName>
    <alternativeName>
        <fullName evidence="1">HSP70</fullName>
    </alternativeName>
    <alternativeName>
        <fullName evidence="1">Heat shock 70 kDa protein</fullName>
    </alternativeName>
    <alternativeName>
        <fullName evidence="1">Heat shock protein 70</fullName>
    </alternativeName>
</protein>
<sequence>MSKVIGIDLGTTNSAVAVLEGNQPKIITNPEGNRTTPSVVAFKDGEIQVGEVAKRQAITNPDTIVSIKRHMGEANYKVKVGDKEYTPQEISAMILQYIKKFSEDYLGEPVKDAVITVPAYFNDSQRQATKDAGKIAGLNVQRIINEPTASALAYGLDKGDKDEKILVYDLGGGTFDVSILQLGDGVFEVLSTNGDTHLGGDDFDNKIIDWLVAEFKKDNNIDLSKDKMAMQRLKDAAEKAKKDLSGVTQTQISLPFISAGPNGPLHLERTLTRAQFDEMTADLVAKTKIPVENALKDAKLTNADIDKVILNGGSTRTPAVQEAVKQWTGKDPDHSINPDEAVALGAAIQGGVISGDVKDVVLLDVTPLSLGIETMGGVFTKLIDRNTTIPTSKSQVFSTAADSQPAVDIHVLQGERPMAADDKTLGRFELTDIPPAPRGVPQIEVKFDIDKNGIVQVSAKDLGTGKSQNITIKSSSGLSDEEIERMKKEAEENADADEKRKEEVDLKNDVDQLLFQTDKTLKDVDGKVPEEDIKKVKDAQEALKKAQQENNLDDMKQKRDDLSKLVQDMTVKLYENAQKNQQAQGGPASGAATDAGAAQGSDDKKSDDDTINGDYKDVSDDDKK</sequence>
<proteinExistence type="inferred from homology"/>
<comment type="function">
    <text evidence="1">Acts as a chaperone.</text>
</comment>
<comment type="induction">
    <text evidence="1">By stress conditions e.g. heat shock.</text>
</comment>
<comment type="similarity">
    <text evidence="1">Belongs to the heat shock protein 70 family.</text>
</comment>
<dbReference type="EMBL" id="CP000423">
    <property type="protein sequence ID" value="ABJ70339.1"/>
    <property type="molecule type" value="Genomic_DNA"/>
</dbReference>
<dbReference type="RefSeq" id="WP_003594633.1">
    <property type="nucleotide sequence ID" value="NC_008526.1"/>
</dbReference>
<dbReference type="RefSeq" id="YP_806781.1">
    <property type="nucleotide sequence ID" value="NC_008526.1"/>
</dbReference>
<dbReference type="SMR" id="Q038N3"/>
<dbReference type="STRING" id="321967.LSEI_1565"/>
<dbReference type="PaxDb" id="321967-LSEI_1565"/>
<dbReference type="KEGG" id="lca:LSEI_1565"/>
<dbReference type="PATRIC" id="fig|321967.11.peg.1545"/>
<dbReference type="HOGENOM" id="CLU_005965_2_4_9"/>
<dbReference type="Proteomes" id="UP000001651">
    <property type="component" value="Chromosome"/>
</dbReference>
<dbReference type="GO" id="GO:0005524">
    <property type="term" value="F:ATP binding"/>
    <property type="evidence" value="ECO:0007669"/>
    <property type="project" value="UniProtKB-UniRule"/>
</dbReference>
<dbReference type="GO" id="GO:0140662">
    <property type="term" value="F:ATP-dependent protein folding chaperone"/>
    <property type="evidence" value="ECO:0007669"/>
    <property type="project" value="InterPro"/>
</dbReference>
<dbReference type="GO" id="GO:0051082">
    <property type="term" value="F:unfolded protein binding"/>
    <property type="evidence" value="ECO:0007669"/>
    <property type="project" value="InterPro"/>
</dbReference>
<dbReference type="CDD" id="cd10234">
    <property type="entry name" value="ASKHA_NBD_HSP70_DnaK-like"/>
    <property type="match status" value="1"/>
</dbReference>
<dbReference type="FunFam" id="2.60.34.10:FF:000014">
    <property type="entry name" value="Chaperone protein DnaK HSP70"/>
    <property type="match status" value="1"/>
</dbReference>
<dbReference type="FunFam" id="3.30.420.40:FF:000020">
    <property type="entry name" value="Chaperone protein HscA homolog"/>
    <property type="match status" value="1"/>
</dbReference>
<dbReference type="FunFam" id="3.30.420.40:FF:000028">
    <property type="entry name" value="heat shock 70 kDa protein-like"/>
    <property type="match status" value="1"/>
</dbReference>
<dbReference type="FunFam" id="3.90.640.10:FF:000003">
    <property type="entry name" value="Molecular chaperone DnaK"/>
    <property type="match status" value="1"/>
</dbReference>
<dbReference type="Gene3D" id="1.20.1270.10">
    <property type="match status" value="1"/>
</dbReference>
<dbReference type="Gene3D" id="3.30.420.40">
    <property type="match status" value="2"/>
</dbReference>
<dbReference type="Gene3D" id="3.90.640.10">
    <property type="entry name" value="Actin, Chain A, domain 4"/>
    <property type="match status" value="1"/>
</dbReference>
<dbReference type="Gene3D" id="2.60.34.10">
    <property type="entry name" value="Substrate Binding Domain Of DNAk, Chain A, domain 1"/>
    <property type="match status" value="1"/>
</dbReference>
<dbReference type="HAMAP" id="MF_00332">
    <property type="entry name" value="DnaK"/>
    <property type="match status" value="1"/>
</dbReference>
<dbReference type="InterPro" id="IPR043129">
    <property type="entry name" value="ATPase_NBD"/>
</dbReference>
<dbReference type="InterPro" id="IPR012725">
    <property type="entry name" value="Chaperone_DnaK"/>
</dbReference>
<dbReference type="InterPro" id="IPR018181">
    <property type="entry name" value="Heat_shock_70_CS"/>
</dbReference>
<dbReference type="InterPro" id="IPR029048">
    <property type="entry name" value="HSP70_C_sf"/>
</dbReference>
<dbReference type="InterPro" id="IPR029047">
    <property type="entry name" value="HSP70_peptide-bd_sf"/>
</dbReference>
<dbReference type="InterPro" id="IPR013126">
    <property type="entry name" value="Hsp_70_fam"/>
</dbReference>
<dbReference type="NCBIfam" id="NF001413">
    <property type="entry name" value="PRK00290.1"/>
    <property type="match status" value="1"/>
</dbReference>
<dbReference type="NCBIfam" id="TIGR02350">
    <property type="entry name" value="prok_dnaK"/>
    <property type="match status" value="1"/>
</dbReference>
<dbReference type="PANTHER" id="PTHR19375">
    <property type="entry name" value="HEAT SHOCK PROTEIN 70KDA"/>
    <property type="match status" value="1"/>
</dbReference>
<dbReference type="Pfam" id="PF00012">
    <property type="entry name" value="HSP70"/>
    <property type="match status" value="1"/>
</dbReference>
<dbReference type="PRINTS" id="PR00301">
    <property type="entry name" value="HEATSHOCK70"/>
</dbReference>
<dbReference type="SUPFAM" id="SSF53067">
    <property type="entry name" value="Actin-like ATPase domain"/>
    <property type="match status" value="2"/>
</dbReference>
<dbReference type="SUPFAM" id="SSF100934">
    <property type="entry name" value="Heat shock protein 70kD (HSP70), C-terminal subdomain"/>
    <property type="match status" value="1"/>
</dbReference>
<dbReference type="SUPFAM" id="SSF100920">
    <property type="entry name" value="Heat shock protein 70kD (HSP70), peptide-binding domain"/>
    <property type="match status" value="1"/>
</dbReference>
<dbReference type="PROSITE" id="PS00297">
    <property type="entry name" value="HSP70_1"/>
    <property type="match status" value="1"/>
</dbReference>
<dbReference type="PROSITE" id="PS00329">
    <property type="entry name" value="HSP70_2"/>
    <property type="match status" value="1"/>
</dbReference>
<name>DNAK_LACP3</name>
<reference key="1">
    <citation type="journal article" date="2006" name="Proc. Natl. Acad. Sci. U.S.A.">
        <title>Comparative genomics of the lactic acid bacteria.</title>
        <authorList>
            <person name="Makarova K.S."/>
            <person name="Slesarev A."/>
            <person name="Wolf Y.I."/>
            <person name="Sorokin A."/>
            <person name="Mirkin B."/>
            <person name="Koonin E.V."/>
            <person name="Pavlov A."/>
            <person name="Pavlova N."/>
            <person name="Karamychev V."/>
            <person name="Polouchine N."/>
            <person name="Shakhova V."/>
            <person name="Grigoriev I."/>
            <person name="Lou Y."/>
            <person name="Rohksar D."/>
            <person name="Lucas S."/>
            <person name="Huang K."/>
            <person name="Goodstein D.M."/>
            <person name="Hawkins T."/>
            <person name="Plengvidhya V."/>
            <person name="Welker D."/>
            <person name="Hughes J."/>
            <person name="Goh Y."/>
            <person name="Benson A."/>
            <person name="Baldwin K."/>
            <person name="Lee J.-H."/>
            <person name="Diaz-Muniz I."/>
            <person name="Dosti B."/>
            <person name="Smeianov V."/>
            <person name="Wechter W."/>
            <person name="Barabote R."/>
            <person name="Lorca G."/>
            <person name="Altermann E."/>
            <person name="Barrangou R."/>
            <person name="Ganesan B."/>
            <person name="Xie Y."/>
            <person name="Rawsthorne H."/>
            <person name="Tamir D."/>
            <person name="Parker C."/>
            <person name="Breidt F."/>
            <person name="Broadbent J.R."/>
            <person name="Hutkins R."/>
            <person name="O'Sullivan D."/>
            <person name="Steele J."/>
            <person name="Unlu G."/>
            <person name="Saier M.H. Jr."/>
            <person name="Klaenhammer T."/>
            <person name="Richardson P."/>
            <person name="Kozyavkin S."/>
            <person name="Weimer B.C."/>
            <person name="Mills D.A."/>
        </authorList>
    </citation>
    <scope>NUCLEOTIDE SEQUENCE [LARGE SCALE GENOMIC DNA]</scope>
    <source>
        <strain>ATCC 334 / BCRC 17002 / CCUG 31169 / CIP 107868 / KCTC 3260 / NRRL B-441</strain>
    </source>
</reference>
<organism>
    <name type="scientific">Lacticaseibacillus paracasei (strain ATCC 334 / BCRC 17002 / CCUG 31169 / CIP 107868 / KCTC 3260 / NRRL B-441)</name>
    <name type="common">Lactobacillus paracasei</name>
    <dbReference type="NCBI Taxonomy" id="321967"/>
    <lineage>
        <taxon>Bacteria</taxon>
        <taxon>Bacillati</taxon>
        <taxon>Bacillota</taxon>
        <taxon>Bacilli</taxon>
        <taxon>Lactobacillales</taxon>
        <taxon>Lactobacillaceae</taxon>
        <taxon>Lacticaseibacillus</taxon>
    </lineage>
</organism>
<accession>Q038N3</accession>
<keyword id="KW-0067">ATP-binding</keyword>
<keyword id="KW-0143">Chaperone</keyword>
<keyword id="KW-0547">Nucleotide-binding</keyword>
<keyword id="KW-0597">Phosphoprotein</keyword>
<keyword id="KW-1185">Reference proteome</keyword>
<keyword id="KW-0346">Stress response</keyword>